<feature type="chain" id="PRO_1000082540" description="tRNA (guanine-N(1)-)-methyltransferase">
    <location>
        <begin position="1"/>
        <end position="245"/>
    </location>
</feature>
<feature type="binding site" evidence="1">
    <location>
        <position position="111"/>
    </location>
    <ligand>
        <name>S-adenosyl-L-methionine</name>
        <dbReference type="ChEBI" id="CHEBI:59789"/>
    </ligand>
</feature>
<feature type="binding site" evidence="1">
    <location>
        <begin position="131"/>
        <end position="136"/>
    </location>
    <ligand>
        <name>S-adenosyl-L-methionine</name>
        <dbReference type="ChEBI" id="CHEBI:59789"/>
    </ligand>
</feature>
<organism>
    <name type="scientific">Staphylococcus aureus (strain JH9)</name>
    <dbReference type="NCBI Taxonomy" id="359786"/>
    <lineage>
        <taxon>Bacteria</taxon>
        <taxon>Bacillati</taxon>
        <taxon>Bacillota</taxon>
        <taxon>Bacilli</taxon>
        <taxon>Bacillales</taxon>
        <taxon>Staphylococcaceae</taxon>
        <taxon>Staphylococcus</taxon>
    </lineage>
</organism>
<name>TRMD_STAA9</name>
<accession>A5ISC5</accession>
<sequence length="245" mass="28114">MKIDYLTLFPEMFDGVLNHSIMKRAQENNKLQINTVNFRDYAINKHNQVDDYPYGGGQGMVLKPEPVFNAMEDLDVTEQTRVILMCPQGEPFSHQKAVELSKADHIVFICGHYEGYDERIRTHLVTDEISMGDYVLTGGELPAMTMTDAIVRLIPGVLGNEQSHQDDSFSDGLLEFPQYTRPREFKGLTVPDVLLSGNHANIDAWRHEQKLIRTYNKRPDLIEKYPLTNEDKQILERYKIGLKKG</sequence>
<gene>
    <name evidence="1" type="primary">trmD</name>
    <name type="ordered locus">SaurJH9_1299</name>
</gene>
<dbReference type="EC" id="2.1.1.228" evidence="1"/>
<dbReference type="EMBL" id="CP000703">
    <property type="protein sequence ID" value="ABQ49098.1"/>
    <property type="molecule type" value="Genomic_DNA"/>
</dbReference>
<dbReference type="RefSeq" id="WP_000687330.1">
    <property type="nucleotide sequence ID" value="NC_009487.1"/>
</dbReference>
<dbReference type="SMR" id="A5ISC5"/>
<dbReference type="KEGG" id="saj:SaurJH9_1299"/>
<dbReference type="HOGENOM" id="CLU_047363_0_1_9"/>
<dbReference type="GO" id="GO:0005829">
    <property type="term" value="C:cytosol"/>
    <property type="evidence" value="ECO:0007669"/>
    <property type="project" value="TreeGrafter"/>
</dbReference>
<dbReference type="GO" id="GO:0052906">
    <property type="term" value="F:tRNA (guanine(37)-N1)-methyltransferase activity"/>
    <property type="evidence" value="ECO:0007669"/>
    <property type="project" value="UniProtKB-UniRule"/>
</dbReference>
<dbReference type="GO" id="GO:0002939">
    <property type="term" value="P:tRNA N1-guanine methylation"/>
    <property type="evidence" value="ECO:0007669"/>
    <property type="project" value="TreeGrafter"/>
</dbReference>
<dbReference type="CDD" id="cd18080">
    <property type="entry name" value="TrmD-like"/>
    <property type="match status" value="1"/>
</dbReference>
<dbReference type="FunFam" id="1.10.1270.20:FF:000001">
    <property type="entry name" value="tRNA (guanine-N(1)-)-methyltransferase"/>
    <property type="match status" value="1"/>
</dbReference>
<dbReference type="FunFam" id="3.40.1280.10:FF:000001">
    <property type="entry name" value="tRNA (guanine-N(1)-)-methyltransferase"/>
    <property type="match status" value="1"/>
</dbReference>
<dbReference type="Gene3D" id="3.40.1280.10">
    <property type="match status" value="1"/>
</dbReference>
<dbReference type="Gene3D" id="1.10.1270.20">
    <property type="entry name" value="tRNA(m1g37)methyltransferase, domain 2"/>
    <property type="match status" value="1"/>
</dbReference>
<dbReference type="HAMAP" id="MF_00605">
    <property type="entry name" value="TrmD"/>
    <property type="match status" value="1"/>
</dbReference>
<dbReference type="InterPro" id="IPR029028">
    <property type="entry name" value="Alpha/beta_knot_MTases"/>
</dbReference>
<dbReference type="InterPro" id="IPR023148">
    <property type="entry name" value="tRNA_m1G_MeTrfase_C_sf"/>
</dbReference>
<dbReference type="InterPro" id="IPR002649">
    <property type="entry name" value="tRNA_m1G_MeTrfase_TrmD"/>
</dbReference>
<dbReference type="InterPro" id="IPR029026">
    <property type="entry name" value="tRNA_m1G_MTases_N"/>
</dbReference>
<dbReference type="InterPro" id="IPR016009">
    <property type="entry name" value="tRNA_MeTrfase_TRMD/TRM10"/>
</dbReference>
<dbReference type="NCBIfam" id="NF000648">
    <property type="entry name" value="PRK00026.1"/>
    <property type="match status" value="1"/>
</dbReference>
<dbReference type="NCBIfam" id="TIGR00088">
    <property type="entry name" value="trmD"/>
    <property type="match status" value="1"/>
</dbReference>
<dbReference type="PANTHER" id="PTHR46417">
    <property type="entry name" value="TRNA (GUANINE-N(1)-)-METHYLTRANSFERASE"/>
    <property type="match status" value="1"/>
</dbReference>
<dbReference type="PANTHER" id="PTHR46417:SF1">
    <property type="entry name" value="TRNA (GUANINE-N(1)-)-METHYLTRANSFERASE"/>
    <property type="match status" value="1"/>
</dbReference>
<dbReference type="Pfam" id="PF01746">
    <property type="entry name" value="tRNA_m1G_MT"/>
    <property type="match status" value="1"/>
</dbReference>
<dbReference type="PIRSF" id="PIRSF000386">
    <property type="entry name" value="tRNA_mtase"/>
    <property type="match status" value="1"/>
</dbReference>
<dbReference type="SUPFAM" id="SSF75217">
    <property type="entry name" value="alpha/beta knot"/>
    <property type="match status" value="1"/>
</dbReference>
<protein>
    <recommendedName>
        <fullName evidence="1">tRNA (guanine-N(1)-)-methyltransferase</fullName>
        <ecNumber evidence="1">2.1.1.228</ecNumber>
    </recommendedName>
    <alternativeName>
        <fullName evidence="1">M1G-methyltransferase</fullName>
    </alternativeName>
    <alternativeName>
        <fullName evidence="1">tRNA [GM37] methyltransferase</fullName>
    </alternativeName>
</protein>
<keyword id="KW-0963">Cytoplasm</keyword>
<keyword id="KW-0489">Methyltransferase</keyword>
<keyword id="KW-0949">S-adenosyl-L-methionine</keyword>
<keyword id="KW-0808">Transferase</keyword>
<keyword id="KW-0819">tRNA processing</keyword>
<evidence type="ECO:0000255" key="1">
    <source>
        <dbReference type="HAMAP-Rule" id="MF_00605"/>
    </source>
</evidence>
<reference key="1">
    <citation type="submission" date="2007-05" db="EMBL/GenBank/DDBJ databases">
        <title>Complete sequence of chromosome of Staphylococcus aureus subsp. aureus JH9.</title>
        <authorList>
            <consortium name="US DOE Joint Genome Institute"/>
            <person name="Copeland A."/>
            <person name="Lucas S."/>
            <person name="Lapidus A."/>
            <person name="Barry K."/>
            <person name="Detter J.C."/>
            <person name="Glavina del Rio T."/>
            <person name="Hammon N."/>
            <person name="Israni S."/>
            <person name="Pitluck S."/>
            <person name="Chain P."/>
            <person name="Malfatti S."/>
            <person name="Shin M."/>
            <person name="Vergez L."/>
            <person name="Schmutz J."/>
            <person name="Larimer F."/>
            <person name="Land M."/>
            <person name="Hauser L."/>
            <person name="Kyrpides N."/>
            <person name="Kim E."/>
            <person name="Tomasz A."/>
            <person name="Richardson P."/>
        </authorList>
    </citation>
    <scope>NUCLEOTIDE SEQUENCE [LARGE SCALE GENOMIC DNA]</scope>
    <source>
        <strain>JH9</strain>
    </source>
</reference>
<comment type="function">
    <text evidence="1">Specifically methylates guanosine-37 in various tRNAs.</text>
</comment>
<comment type="catalytic activity">
    <reaction evidence="1">
        <text>guanosine(37) in tRNA + S-adenosyl-L-methionine = N(1)-methylguanosine(37) in tRNA + S-adenosyl-L-homocysteine + H(+)</text>
        <dbReference type="Rhea" id="RHEA:36899"/>
        <dbReference type="Rhea" id="RHEA-COMP:10145"/>
        <dbReference type="Rhea" id="RHEA-COMP:10147"/>
        <dbReference type="ChEBI" id="CHEBI:15378"/>
        <dbReference type="ChEBI" id="CHEBI:57856"/>
        <dbReference type="ChEBI" id="CHEBI:59789"/>
        <dbReference type="ChEBI" id="CHEBI:73542"/>
        <dbReference type="ChEBI" id="CHEBI:74269"/>
        <dbReference type="EC" id="2.1.1.228"/>
    </reaction>
</comment>
<comment type="subunit">
    <text evidence="1">Homodimer.</text>
</comment>
<comment type="subcellular location">
    <subcellularLocation>
        <location evidence="1">Cytoplasm</location>
    </subcellularLocation>
</comment>
<comment type="similarity">
    <text evidence="1">Belongs to the RNA methyltransferase TrmD family.</text>
</comment>
<proteinExistence type="inferred from homology"/>